<dbReference type="EMBL" id="BC079238">
    <property type="protein sequence ID" value="AAH79238.1"/>
    <property type="status" value="ALT_INIT"/>
    <property type="molecule type" value="mRNA"/>
</dbReference>
<dbReference type="EMBL" id="BC083924">
    <property type="protein sequence ID" value="AAH83924.1"/>
    <property type="status" value="ALT_INIT"/>
    <property type="molecule type" value="mRNA"/>
</dbReference>
<dbReference type="RefSeq" id="NP_001005559.2">
    <property type="nucleotide sequence ID" value="NM_001005559.2"/>
</dbReference>
<dbReference type="RefSeq" id="NP_001139476.1">
    <molecule id="Q5XHX6-1"/>
    <property type="nucleotide sequence ID" value="NM_001146004.1"/>
</dbReference>
<dbReference type="RefSeq" id="XP_006245669.1">
    <molecule id="Q5XHX6-2"/>
    <property type="nucleotide sequence ID" value="XM_006245607.5"/>
</dbReference>
<dbReference type="SMR" id="Q5XHX6"/>
<dbReference type="FunCoup" id="Q5XHX6">
    <property type="interactions" value="2"/>
</dbReference>
<dbReference type="STRING" id="10116.ENSRNOP00000034030"/>
<dbReference type="iPTMnet" id="Q5XHX6"/>
<dbReference type="PhosphoSitePlus" id="Q5XHX6"/>
<dbReference type="PaxDb" id="10116-ENSRNOP00000048534"/>
<dbReference type="Ensembl" id="ENSRNOT00000032330.6">
    <molecule id="Q5XHX6-1"/>
    <property type="protein sequence ID" value="ENSRNOP00000034030.4"/>
    <property type="gene ID" value="ENSRNOG00000027916.7"/>
</dbReference>
<dbReference type="Ensembl" id="ENSRNOT00000065073.4">
    <molecule id="Q5XHX6-2"/>
    <property type="protein sequence ID" value="ENSRNOP00000062071.2"/>
    <property type="gene ID" value="ENSRNOG00000027916.7"/>
</dbReference>
<dbReference type="GeneID" id="316777"/>
<dbReference type="KEGG" id="rno:316777"/>
<dbReference type="UCSC" id="RGD:1359251">
    <molecule id="Q5XHX6-1"/>
    <property type="organism name" value="rat"/>
</dbReference>
<dbReference type="AGR" id="RGD:1359251"/>
<dbReference type="CTD" id="84203"/>
<dbReference type="RGD" id="1359251">
    <property type="gene designation" value="Txndc2"/>
</dbReference>
<dbReference type="eggNOG" id="KOG0907">
    <property type="taxonomic scope" value="Eukaryota"/>
</dbReference>
<dbReference type="GeneTree" id="ENSGT00940000163147"/>
<dbReference type="InParanoid" id="Q5XHX6"/>
<dbReference type="OMA" id="PNFPAKF"/>
<dbReference type="PhylomeDB" id="Q5XHX6"/>
<dbReference type="TreeFam" id="TF106377"/>
<dbReference type="PRO" id="PR:Q5XHX6"/>
<dbReference type="Proteomes" id="UP000002494">
    <property type="component" value="Chromosome 9"/>
</dbReference>
<dbReference type="Bgee" id="ENSRNOG00000027916">
    <property type="expression patterns" value="Expressed in testis and 1 other cell type or tissue"/>
</dbReference>
<dbReference type="ExpressionAtlas" id="Q5XHX6">
    <property type="expression patterns" value="baseline"/>
</dbReference>
<dbReference type="GO" id="GO:0005737">
    <property type="term" value="C:cytoplasm"/>
    <property type="evidence" value="ECO:0000266"/>
    <property type="project" value="RGD"/>
</dbReference>
<dbReference type="GO" id="GO:0001520">
    <property type="term" value="C:outer dense fiber"/>
    <property type="evidence" value="ECO:0000314"/>
    <property type="project" value="RGD"/>
</dbReference>
<dbReference type="GO" id="GO:0036126">
    <property type="term" value="C:sperm flagellum"/>
    <property type="evidence" value="ECO:0000266"/>
    <property type="project" value="RGD"/>
</dbReference>
<dbReference type="GO" id="GO:0003756">
    <property type="term" value="F:protein disulfide isomerase activity"/>
    <property type="evidence" value="ECO:0000266"/>
    <property type="project" value="RGD"/>
</dbReference>
<dbReference type="GO" id="GO:0004791">
    <property type="term" value="F:thioredoxin-disulfide reductase (NADPH) activity"/>
    <property type="evidence" value="ECO:0000266"/>
    <property type="project" value="RGD"/>
</dbReference>
<dbReference type="GO" id="GO:0030154">
    <property type="term" value="P:cell differentiation"/>
    <property type="evidence" value="ECO:0007669"/>
    <property type="project" value="UniProtKB-KW"/>
</dbReference>
<dbReference type="GO" id="GO:0034614">
    <property type="term" value="P:cellular response to reactive oxygen species"/>
    <property type="evidence" value="ECO:0000266"/>
    <property type="project" value="RGD"/>
</dbReference>
<dbReference type="GO" id="GO:0030317">
    <property type="term" value="P:flagellated sperm motility"/>
    <property type="evidence" value="ECO:0000266"/>
    <property type="project" value="RGD"/>
</dbReference>
<dbReference type="GO" id="GO:0007283">
    <property type="term" value="P:spermatogenesis"/>
    <property type="evidence" value="ECO:0007669"/>
    <property type="project" value="UniProtKB-KW"/>
</dbReference>
<dbReference type="CDD" id="cd02947">
    <property type="entry name" value="TRX_family"/>
    <property type="match status" value="1"/>
</dbReference>
<dbReference type="FunFam" id="3.40.30.10:FF:000224">
    <property type="entry name" value="Thioredoxin domain containing 2 (Spermatozoa)"/>
    <property type="match status" value="1"/>
</dbReference>
<dbReference type="Gene3D" id="3.40.30.10">
    <property type="entry name" value="Glutaredoxin"/>
    <property type="match status" value="1"/>
</dbReference>
<dbReference type="InterPro" id="IPR036249">
    <property type="entry name" value="Thioredoxin-like_sf"/>
</dbReference>
<dbReference type="InterPro" id="IPR013766">
    <property type="entry name" value="Thioredoxin_domain"/>
</dbReference>
<dbReference type="PANTHER" id="PTHR46115">
    <property type="entry name" value="THIOREDOXIN-LIKE PROTEIN 1"/>
    <property type="match status" value="1"/>
</dbReference>
<dbReference type="Pfam" id="PF00085">
    <property type="entry name" value="Thioredoxin"/>
    <property type="match status" value="1"/>
</dbReference>
<dbReference type="SUPFAM" id="SSF52833">
    <property type="entry name" value="Thioredoxin-like"/>
    <property type="match status" value="1"/>
</dbReference>
<dbReference type="PROSITE" id="PS51352">
    <property type="entry name" value="THIOREDOXIN_2"/>
    <property type="match status" value="1"/>
</dbReference>
<comment type="function">
    <text evidence="1">Probably plays a regulatory role in sperm development. May participate in regulation of fibrous sheath (FS) assembly by supporting the formation of disulfide bonds during sperm tail morphogenesis. May also be required to rectify incorrect disulfide pairing and generate suitable pairs between the FS constituents. Can reduce disulfide bonds in vitro in the presence of NADP and thioredoxin reductase (By similarity).</text>
</comment>
<comment type="subcellular location">
    <subcellularLocation>
        <location evidence="1">Cytoplasm</location>
    </subcellularLocation>
</comment>
<comment type="alternative products">
    <event type="alternative splicing"/>
    <isoform>
        <id>Q5XHX6-1</id>
        <name>1</name>
        <sequence type="displayed"/>
    </isoform>
    <isoform>
        <id>Q5XHX6-2</id>
        <name>2</name>
        <sequence type="described" ref="VSP_014329"/>
    </isoform>
</comment>
<comment type="tissue specificity">
    <text evidence="4">Testis-specific. Strongly expressed in the testicular seminiferous tubules, mostly in the round spermatids.</text>
</comment>
<comment type="developmental stage">
    <text evidence="4">Transiently expressed in spermiogenesis, being mostly concentrated in the periaxonemal compartment of the tail of the elongating spermatid, where it transiently associates with the longitudinal column of the FS. In the very last steps (steps 17-19), when periaxonemal expression disappears, it is still weakly present in the shrinking cytoplasmic lobe (at protein level).</text>
</comment>
<comment type="sequence caution" evidence="6">
    <conflict type="erroneous initiation">
        <sequence resource="EMBL-CDS" id="AAH79238"/>
    </conflict>
</comment>
<comment type="sequence caution" evidence="6">
    <conflict type="erroneous initiation">
        <sequence resource="EMBL-CDS" id="AAH83924"/>
    </conflict>
</comment>
<protein>
    <recommendedName>
        <fullName>Thioredoxin domain-containing protein 2</fullName>
    </recommendedName>
    <alternativeName>
        <fullName>Spermatid-specific thioredoxin-1</fullName>
        <shortName>Sptrx-1</shortName>
    </alternativeName>
</protein>
<sequence length="550" mass="61103">MFKKNQKLSKDKGLEVNSVQAGAPEESDVKLNNGGKANERGSNEFLDTAQSKEKVIASVVGNMLHMSTEESEPPQQVSSTSMFSENTIYPKHEGSPKSSTKNTQLKQEDISKTSSYSKQTNSSNIPKSLAITTYPKQGSTLKPAANGTHDREAEKPKSSEDLIQSKKGDIFKPSEDSIQSKKGDMPKSSEDPIQSKKDDTAKSLEDTIQSKNGDMPKSSEDPIQSKKDDTARSLEDSIQSKKGDMPKSSDTIQSKESETPKFLQDTIQSKGGKINKQVKDSMKSKESKIRKPLKDSIQSKENKIPKSSQDSAQPKEGKIHKPLKDSLPSKEGDISKPSEDTIQAKEEITVSPEDTIQAKEEITMSPEDTIQAKEEITVSPEDTIQAKEEITVSPEDTMQSKEEITVSPEDTVQSQEGDIKSSEDVQPSENEIFPFEAEIETLEEGMVRVIKDKEEFEEVLKDAGEKLVAVDFSAPWCGPCRKMRPHFHSLSLKHEDVIFLEVDTEDCEQLVQDCEVFHLPTFQFYKNEEKVGEFSGALVEKLEKSIAELK</sequence>
<reference key="1">
    <citation type="journal article" date="2004" name="Genome Res.">
        <title>The status, quality, and expansion of the NIH full-length cDNA project: the Mammalian Gene Collection (MGC).</title>
        <authorList>
            <consortium name="The MGC Project Team"/>
        </authorList>
    </citation>
    <scope>NUCLEOTIDE SEQUENCE [LARGE SCALE MRNA] (ISOFORMS 1 AND 2)</scope>
    <source>
        <tissue>Testis</tissue>
    </source>
</reference>
<reference key="2">
    <citation type="journal article" date="2002" name="Biol. Reprod.">
        <title>Developmental expression of spermatid-specific thioredoxin-1 protein: transient association to the longitudinal columns of the fibrous sheath during sperm tail formation.</title>
        <authorList>
            <person name="Yu Y."/>
            <person name="Oko R."/>
            <person name="Miranda-Vizuete A."/>
        </authorList>
    </citation>
    <scope>TISSUE SPECIFICITY</scope>
    <scope>DEVELOPMENTAL STAGE</scope>
</reference>
<reference key="3">
    <citation type="journal article" date="2012" name="Nat. Commun.">
        <title>Quantitative maps of protein phosphorylation sites across 14 different rat organs and tissues.</title>
        <authorList>
            <person name="Lundby A."/>
            <person name="Secher A."/>
            <person name="Lage K."/>
            <person name="Nordsborg N.B."/>
            <person name="Dmytriyev A."/>
            <person name="Lundby C."/>
            <person name="Olsen J.V."/>
        </authorList>
    </citation>
    <scope>PHOSPHORYLATION [LARGE SCALE ANALYSIS] AT SER-42; SER-51; SER-158; SER-351; SER-379 AND SER-407</scope>
    <scope>IDENTIFICATION BY MASS SPECTROMETRY [LARGE SCALE ANALYSIS]</scope>
</reference>
<accession>Q5XHX6</accession>
<accession>Q6AY11</accession>
<proteinExistence type="evidence at protein level"/>
<gene>
    <name type="primary">Txndc2</name>
    <name type="synonym">Sptrx</name>
    <name type="synonym">Sptrx1</name>
</gene>
<evidence type="ECO:0000250" key="1"/>
<evidence type="ECO:0000255" key="2">
    <source>
        <dbReference type="PROSITE-ProRule" id="PRU00691"/>
    </source>
</evidence>
<evidence type="ECO:0000256" key="3">
    <source>
        <dbReference type="SAM" id="MobiDB-lite"/>
    </source>
</evidence>
<evidence type="ECO:0000269" key="4">
    <source>
    </source>
</evidence>
<evidence type="ECO:0000303" key="5">
    <source>
    </source>
</evidence>
<evidence type="ECO:0000305" key="6"/>
<evidence type="ECO:0007744" key="7">
    <source>
    </source>
</evidence>
<organism>
    <name type="scientific">Rattus norvegicus</name>
    <name type="common">Rat</name>
    <dbReference type="NCBI Taxonomy" id="10116"/>
    <lineage>
        <taxon>Eukaryota</taxon>
        <taxon>Metazoa</taxon>
        <taxon>Chordata</taxon>
        <taxon>Craniata</taxon>
        <taxon>Vertebrata</taxon>
        <taxon>Euteleostomi</taxon>
        <taxon>Mammalia</taxon>
        <taxon>Eutheria</taxon>
        <taxon>Euarchontoglires</taxon>
        <taxon>Glires</taxon>
        <taxon>Rodentia</taxon>
        <taxon>Myomorpha</taxon>
        <taxon>Muroidea</taxon>
        <taxon>Muridae</taxon>
        <taxon>Murinae</taxon>
        <taxon>Rattus</taxon>
    </lineage>
</organism>
<name>TXND2_RAT</name>
<feature type="chain" id="PRO_0000120155" description="Thioredoxin domain-containing protein 2">
    <location>
        <begin position="1"/>
        <end position="550"/>
    </location>
</feature>
<feature type="repeat" description="1">
    <location>
        <begin position="104"/>
        <end position="118"/>
    </location>
</feature>
<feature type="repeat" description="2">
    <location>
        <begin position="119"/>
        <end position="133"/>
    </location>
</feature>
<feature type="repeat" description="3">
    <location>
        <begin position="134"/>
        <end position="148"/>
    </location>
</feature>
<feature type="repeat" description="4">
    <location>
        <begin position="149"/>
        <end position="163"/>
    </location>
</feature>
<feature type="repeat" description="5">
    <location>
        <begin position="164"/>
        <end position="178"/>
    </location>
</feature>
<feature type="repeat" description="6">
    <location>
        <begin position="179"/>
        <end position="193"/>
    </location>
</feature>
<feature type="repeat" description="7">
    <location>
        <begin position="194"/>
        <end position="208"/>
    </location>
</feature>
<feature type="repeat" description="8">
    <location>
        <begin position="209"/>
        <end position="223"/>
    </location>
</feature>
<feature type="repeat" description="9">
    <location>
        <begin position="224"/>
        <end position="238"/>
    </location>
</feature>
<feature type="repeat" description="10">
    <location>
        <begin position="239"/>
        <end position="252"/>
    </location>
</feature>
<feature type="repeat" description="11">
    <location>
        <begin position="253"/>
        <end position="267"/>
    </location>
</feature>
<feature type="repeat" description="12">
    <location>
        <begin position="268"/>
        <end position="282"/>
    </location>
</feature>
<feature type="repeat" description="13">
    <location>
        <begin position="283"/>
        <end position="297"/>
    </location>
</feature>
<feature type="repeat" description="14">
    <location>
        <begin position="298"/>
        <end position="312"/>
    </location>
</feature>
<feature type="repeat" description="15">
    <location>
        <begin position="313"/>
        <end position="327"/>
    </location>
</feature>
<feature type="repeat" description="16">
    <location>
        <begin position="328"/>
        <end position="342"/>
    </location>
</feature>
<feature type="repeat" description="17">
    <location>
        <begin position="343"/>
        <end position="357"/>
    </location>
</feature>
<feature type="repeat" description="18">
    <location>
        <begin position="358"/>
        <end position="384"/>
    </location>
</feature>
<feature type="repeat" description="19">
    <location>
        <begin position="385"/>
        <end position="399"/>
    </location>
</feature>
<feature type="repeat" description="20">
    <location>
        <begin position="400"/>
        <end position="412"/>
    </location>
</feature>
<feature type="domain" description="Thioredoxin" evidence="2">
    <location>
        <begin position="401"/>
        <end position="550"/>
    </location>
</feature>
<feature type="repeat" description="21">
    <location>
        <begin position="413"/>
        <end position="425"/>
    </location>
</feature>
<feature type="repeat" description="22">
    <location>
        <begin position="426"/>
        <end position="440"/>
    </location>
</feature>
<feature type="region of interest" description="Disordered" evidence="3">
    <location>
        <begin position="1"/>
        <end position="50"/>
    </location>
</feature>
<feature type="region of interest" description="Disordered" evidence="3">
    <location>
        <begin position="63"/>
        <end position="428"/>
    </location>
</feature>
<feature type="region of interest" description="22 X 15 AA approximate tandem repeat of Q-P-K-X-G-D-I-P-K-S-[PS]-E-[KE]-X-I">
    <location>
        <begin position="104"/>
        <end position="440"/>
    </location>
</feature>
<feature type="compositionally biased region" description="Polar residues" evidence="3">
    <location>
        <begin position="73"/>
        <end position="87"/>
    </location>
</feature>
<feature type="compositionally biased region" description="Polar residues" evidence="3">
    <location>
        <begin position="96"/>
        <end position="105"/>
    </location>
</feature>
<feature type="compositionally biased region" description="Polar residues" evidence="3">
    <location>
        <begin position="112"/>
        <end position="140"/>
    </location>
</feature>
<feature type="compositionally biased region" description="Basic and acidic residues" evidence="3">
    <location>
        <begin position="148"/>
        <end position="205"/>
    </location>
</feature>
<feature type="compositionally biased region" description="Basic and acidic residues" evidence="3">
    <location>
        <begin position="217"/>
        <end position="259"/>
    </location>
</feature>
<feature type="compositionally biased region" description="Basic and acidic residues" evidence="3">
    <location>
        <begin position="277"/>
        <end position="304"/>
    </location>
</feature>
<feature type="compositionally biased region" description="Basic and acidic residues" evidence="3">
    <location>
        <begin position="313"/>
        <end position="348"/>
    </location>
</feature>
<feature type="modified residue" description="Phosphoserine" evidence="7">
    <location>
        <position position="42"/>
    </location>
</feature>
<feature type="modified residue" description="Phosphoserine" evidence="7">
    <location>
        <position position="51"/>
    </location>
</feature>
<feature type="modified residue" description="Phosphoserine" evidence="7">
    <location>
        <position position="158"/>
    </location>
</feature>
<feature type="modified residue" description="Phosphoserine" evidence="7">
    <location>
        <position position="351"/>
    </location>
</feature>
<feature type="modified residue" description="Phosphoserine" evidence="7">
    <location>
        <position position="379"/>
    </location>
</feature>
<feature type="modified residue" description="Phosphoserine" evidence="7">
    <location>
        <position position="407"/>
    </location>
</feature>
<feature type="disulfide bond" description="Redox-active" evidence="2">
    <location>
        <begin position="477"/>
        <end position="480"/>
    </location>
</feature>
<feature type="splice variant" id="VSP_014329" description="In isoform 2." evidence="5">
    <original>MFKKNQKLSKDKGLEVNSVQAGAPEESDVKLNNGGKANERGSN</original>
    <variation>MQSKCGKQANDLKMITELFLK</variation>
    <location>
        <begin position="1"/>
        <end position="43"/>
    </location>
</feature>
<keyword id="KW-0025">Alternative splicing</keyword>
<keyword id="KW-0963">Cytoplasm</keyword>
<keyword id="KW-0217">Developmental protein</keyword>
<keyword id="KW-0221">Differentiation</keyword>
<keyword id="KW-1015">Disulfide bond</keyword>
<keyword id="KW-0597">Phosphoprotein</keyword>
<keyword id="KW-0676">Redox-active center</keyword>
<keyword id="KW-1185">Reference proteome</keyword>
<keyword id="KW-0677">Repeat</keyword>
<keyword id="KW-0744">Spermatogenesis</keyword>